<sequence>MSESAIADFVSSFIPDTATHVEPVRGRVVMSKRRIVLAADDEKTTIPLNGVFDVQHETAPGDLARFFEDTVTIAYEHDEDRHVAVIEGGGSTVDRFVTLVFKALVHGTTVYAKHPARRGGRITDQPFEKGNLALSPGDLTITGDADTTIDLSTVSHFERVDREVNGSNKQLLSVRHMGSTGPITTELALSSGRKMNLLGRYIRLQYTHLKQELADVTLTSEEIEALVAIYSSGPNASLAAVLGVDASRVTMLLNDLIEKELVTDDDGIALTSLGRAAVSEHIEDVNL</sequence>
<feature type="chain" id="PRO_0000429072" description="Taxis protein CheF2">
    <location>
        <begin position="1"/>
        <end position="287"/>
    </location>
</feature>
<protein>
    <recommendedName>
        <fullName>Taxis protein CheF2</fullName>
    </recommendedName>
</protein>
<proteinExistence type="evidence at protein level"/>
<comment type="function">
    <text evidence="1">Involved in taxis signal transduction.</text>
</comment>
<comment type="subunit">
    <text evidence="1">Interacts with chemotaxis (Che) proteins as well as flagella accessory (Fla) proteins.</text>
</comment>
<comment type="disruption phenotype">
    <text evidence="1">Deletion has only minimal effects.</text>
</comment>
<name>CHEF2_HALS3</name>
<evidence type="ECO:0000269" key="1">
    <source>
    </source>
</evidence>
<dbReference type="EMBL" id="AM774415">
    <property type="protein sequence ID" value="CAP13659.1"/>
    <property type="molecule type" value="Genomic_DNA"/>
</dbReference>
<dbReference type="RefSeq" id="WP_010902685.1">
    <property type="nucleotide sequence ID" value="NC_010364.1"/>
</dbReference>
<dbReference type="SMR" id="B0R4J4"/>
<dbReference type="EnsemblBacteria" id="CAP13659">
    <property type="protein sequence ID" value="CAP13659"/>
    <property type="gene ID" value="OE_2404R"/>
</dbReference>
<dbReference type="GeneID" id="89349358"/>
<dbReference type="KEGG" id="hsl:OE_2404R"/>
<dbReference type="HOGENOM" id="CLU_063179_0_0_2"/>
<dbReference type="PhylomeDB" id="B0R4J4"/>
<dbReference type="Proteomes" id="UP000001321">
    <property type="component" value="Chromosome"/>
</dbReference>
<dbReference type="GO" id="GO:0006935">
    <property type="term" value="P:chemotaxis"/>
    <property type="evidence" value="ECO:0007669"/>
    <property type="project" value="UniProtKB-KW"/>
</dbReference>
<dbReference type="Gene3D" id="1.10.10.10">
    <property type="entry name" value="Winged helix-like DNA-binding domain superfamily/Winged helix DNA-binding domain"/>
    <property type="match status" value="1"/>
</dbReference>
<dbReference type="InterPro" id="IPR007381">
    <property type="entry name" value="CheF1/F2"/>
</dbReference>
<dbReference type="InterPro" id="IPR036388">
    <property type="entry name" value="WH-like_DNA-bd_sf"/>
</dbReference>
<dbReference type="InterPro" id="IPR036390">
    <property type="entry name" value="WH_DNA-bd_sf"/>
</dbReference>
<dbReference type="PANTHER" id="PTHR42201">
    <property type="entry name" value="TAXIS PROTEIN"/>
    <property type="match status" value="1"/>
</dbReference>
<dbReference type="PANTHER" id="PTHR42201:SF1">
    <property type="entry name" value="TAXIS PROTEIN"/>
    <property type="match status" value="1"/>
</dbReference>
<dbReference type="Pfam" id="PF04283">
    <property type="entry name" value="CheF-arch"/>
    <property type="match status" value="1"/>
</dbReference>
<dbReference type="PIRSF" id="PIRSF026802">
    <property type="entry name" value="UCP026802"/>
    <property type="match status" value="1"/>
</dbReference>
<dbReference type="SUPFAM" id="SSF46785">
    <property type="entry name" value="Winged helix' DNA-binding domain"/>
    <property type="match status" value="1"/>
</dbReference>
<organism>
    <name type="scientific">Halobacterium salinarum (strain ATCC 29341 / DSM 671 / R1)</name>
    <dbReference type="NCBI Taxonomy" id="478009"/>
    <lineage>
        <taxon>Archaea</taxon>
        <taxon>Methanobacteriati</taxon>
        <taxon>Methanobacteriota</taxon>
        <taxon>Stenosarchaea group</taxon>
        <taxon>Halobacteria</taxon>
        <taxon>Halobacteriales</taxon>
        <taxon>Halobacteriaceae</taxon>
        <taxon>Halobacterium</taxon>
        <taxon>Halobacterium salinarum NRC-34001</taxon>
    </lineage>
</organism>
<keyword id="KW-0145">Chemotaxis</keyword>
<gene>
    <name type="primary">cheF2</name>
    <name type="ordered locus">OE_2404R</name>
</gene>
<accession>B0R4J4</accession>
<reference key="1">
    <citation type="journal article" date="2008" name="Genomics">
        <title>Evolution in the laboratory: the genome of Halobacterium salinarum strain R1 compared to that of strain NRC-1.</title>
        <authorList>
            <person name="Pfeiffer F."/>
            <person name="Schuster S.C."/>
            <person name="Broicher A."/>
            <person name="Falb M."/>
            <person name="Palm P."/>
            <person name="Rodewald K."/>
            <person name="Ruepp A."/>
            <person name="Soppa J."/>
            <person name="Tittor J."/>
            <person name="Oesterhelt D."/>
        </authorList>
    </citation>
    <scope>NUCLEOTIDE SEQUENCE [LARGE SCALE GENOMIC DNA]</scope>
    <source>
        <strain>ATCC 29341 / DSM 671 / R1</strain>
    </source>
</reference>
<reference key="2">
    <citation type="journal article" date="2009" name="BMC Microbiol.">
        <title>Identification of Archaea-specific chemotaxis proteins which interact with the flagellar apparatus.</title>
        <authorList>
            <person name="Schlesner M."/>
            <person name="Miller A."/>
            <person name="Streif S."/>
            <person name="Staudinger W.F."/>
            <person name="Muller J."/>
            <person name="Scheffer B."/>
            <person name="Siedler F."/>
            <person name="Oesterhelt D."/>
        </authorList>
    </citation>
    <scope>FUNCTION</scope>
    <scope>INTERACTION WITH CHE AND FLA PROTEINS</scope>
    <scope>DISRUPTION PHENOTYPE</scope>
    <scope>GENE NAME</scope>
    <source>
        <strain>ATCC 29341 / DSM 671 / R1</strain>
    </source>
</reference>